<comment type="function">
    <text evidence="4 5 6 8 9">Receptor for KLRB1 that protects target cells against natural killer cell-mediated lysis (PubMed:16339513, PubMed:20843815). Inhibits osteoclast formation (PubMed:14753741, PubMed:15123656). Inhibits bone resorption (PubMed:14753741). Modulates the release of interferon-gamma (PubMed:15104121). Binds high molecular weight sulfated glycosaminoglycans (PubMed:15123656).</text>
</comment>
<comment type="subunit">
    <text evidence="5 9 10 11">Homodimer; disulfide-linked.</text>
</comment>
<comment type="interaction">
    <interactant intactId="EBI-13640978">
        <id>Q9UHP7-1</id>
    </interactant>
    <interactant intactId="EBI-2805465">
        <id>Q12918</id>
        <label>KLRB1</label>
    </interactant>
    <organismsDiffer>false</organismsDiffer>
    <experiments>2</experiments>
</comment>
<comment type="interaction">
    <interactant intactId="EBI-11749983">
        <id>Q9UHP7-3</id>
    </interactant>
    <interactant intactId="EBI-10827839">
        <id>Q15848</id>
        <label>ADIPOQ</label>
    </interactant>
    <organismsDiffer>false</organismsDiffer>
    <experiments>3</experiments>
</comment>
<comment type="interaction">
    <interactant intactId="EBI-11749983">
        <id>Q9UHP7-3</id>
    </interactant>
    <interactant intactId="EBI-721179">
        <id>P27449</id>
        <label>ATP6V0C</label>
    </interactant>
    <organismsDiffer>false</organismsDiffer>
    <experiments>3</experiments>
</comment>
<comment type="interaction">
    <interactant intactId="EBI-11749983">
        <id>Q9UHP7-3</id>
    </interactant>
    <interactant intactId="EBI-14141066">
        <id>Q9Y2C3</id>
        <label>B3GALT5</label>
    </interactant>
    <organismsDiffer>false</organismsDiffer>
    <experiments>3</experiments>
</comment>
<comment type="interaction">
    <interactant intactId="EBI-11749983">
        <id>Q9UHP7-3</id>
    </interactant>
    <interactant intactId="EBI-12244618">
        <id>Q6PL45-2</id>
        <label>BRICD5</label>
    </interactant>
    <organismsDiffer>false</organismsDiffer>
    <experiments>3</experiments>
</comment>
<comment type="interaction">
    <interactant intactId="EBI-11749983">
        <id>Q9UHP7-3</id>
    </interactant>
    <interactant intactId="EBI-2826276">
        <id>P34810</id>
        <label>CD68</label>
    </interactant>
    <organismsDiffer>false</organismsDiffer>
    <experiments>3</experiments>
</comment>
<comment type="interaction">
    <interactant intactId="EBI-11749983">
        <id>Q9UHP7-3</id>
    </interactant>
    <interactant intactId="EBI-12256978">
        <id>Q8N6F1-2</id>
        <label>CLDN19</label>
    </interactant>
    <organismsDiffer>false</organismsDiffer>
    <experiments>3</experiments>
</comment>
<comment type="interaction">
    <interactant intactId="EBI-11749983">
        <id>Q9UHP7-3</id>
    </interactant>
    <interactant intactId="EBI-751440">
        <id>P57739</id>
        <label>CLDN2</label>
    </interactant>
    <organismsDiffer>false</organismsDiffer>
    <experiments>3</experiments>
</comment>
<comment type="interaction">
    <interactant intactId="EBI-11749983">
        <id>Q9UHP7-3</id>
    </interactant>
    <interactant intactId="EBI-15839595">
        <id>Q6UVW9</id>
        <label>CLEC2A</label>
    </interactant>
    <organismsDiffer>false</organismsDiffer>
    <experiments>3</experiments>
</comment>
<comment type="interaction">
    <interactant intactId="EBI-11749983">
        <id>Q9UHP7-3</id>
    </interactant>
    <interactant intactId="EBI-12813623">
        <id>A0PK11</id>
        <label>CLRN2</label>
    </interactant>
    <organismsDiffer>false</organismsDiffer>
    <experiments>3</experiments>
</comment>
<comment type="interaction">
    <interactant intactId="EBI-11749983">
        <id>Q9UHP7-3</id>
    </interactant>
    <interactant intactId="EBI-3911467">
        <id>Q07325</id>
        <label>CXCL9</label>
    </interactant>
    <organismsDiffer>false</organismsDiffer>
    <experiments>3</experiments>
</comment>
<comment type="interaction">
    <interactant intactId="EBI-11749983">
        <id>Q9UHP7-3</id>
    </interactant>
    <interactant intactId="EBI-10244198">
        <id>Q5J5C9</id>
        <label>DEFB121</label>
    </interactant>
    <organismsDiffer>false</organismsDiffer>
    <experiments>3</experiments>
</comment>
<comment type="interaction">
    <interactant intactId="EBI-11749983">
        <id>Q9UHP7-3</id>
    </interactant>
    <interactant intactId="EBI-12909060">
        <id>Q5MY95-2</id>
        <label>ENTPD8</label>
    </interactant>
    <organismsDiffer>false</organismsDiffer>
    <experiments>3</experiments>
</comment>
<comment type="interaction">
    <interactant intactId="EBI-11749983">
        <id>Q9UHP7-3</id>
    </interactant>
    <interactant intactId="EBI-10976398">
        <id>Q7Z2K6</id>
        <label>ERMP1</label>
    </interactant>
    <organismsDiffer>false</organismsDiffer>
    <experiments>3</experiments>
</comment>
<comment type="interaction">
    <interactant intactId="EBI-11749983">
        <id>Q9UHP7-3</id>
    </interactant>
    <interactant intactId="EBI-2876774">
        <id>Q92520</id>
        <label>FAM3C</label>
    </interactant>
    <organismsDiffer>false</organismsDiffer>
    <experiments>3</experiments>
</comment>
<comment type="interaction">
    <interactant intactId="EBI-11749983">
        <id>Q9UHP7-3</id>
    </interactant>
    <interactant intactId="EBI-12142257">
        <id>Q8TBE3</id>
        <label>FNDC9</label>
    </interactant>
    <organismsDiffer>false</organismsDiffer>
    <experiments>3</experiments>
</comment>
<comment type="interaction">
    <interactant intactId="EBI-11749983">
        <id>Q9UHP7-3</id>
    </interactant>
    <interactant intactId="EBI-18076404">
        <id>O15529</id>
        <label>GPR42</label>
    </interactant>
    <organismsDiffer>false</organismsDiffer>
    <experiments>3</experiments>
</comment>
<comment type="interaction">
    <interactant intactId="EBI-11749983">
        <id>Q9UHP7-3</id>
    </interactant>
    <interactant intactId="EBI-12838366">
        <id>Q01638-2</id>
        <label>IL1RL1</label>
    </interactant>
    <organismsDiffer>false</organismsDiffer>
    <experiments>3</experiments>
</comment>
<comment type="interaction">
    <interactant intactId="EBI-11749983">
        <id>Q9UHP7-3</id>
    </interactant>
    <interactant intactId="EBI-9018187">
        <id>P26715</id>
        <label>KLRC1</label>
    </interactant>
    <organismsDiffer>false</organismsDiffer>
    <experiments>4</experiments>
</comment>
<comment type="interaction">
    <interactant intactId="EBI-11749983">
        <id>Q9UHP7-3</id>
    </interactant>
    <interactant intactId="EBI-750776">
        <id>O95214</id>
        <label>LEPROTL1</label>
    </interactant>
    <organismsDiffer>false</organismsDiffer>
    <experiments>3</experiments>
</comment>
<comment type="interaction">
    <interactant intactId="EBI-11749983">
        <id>Q9UHP7-3</id>
    </interactant>
    <interactant intactId="EBI-3919611">
        <id>Q16617</id>
        <label>NKG7</label>
    </interactant>
    <organismsDiffer>false</organismsDiffer>
    <experiments>3</experiments>
</comment>
<comment type="interaction">
    <interactant intactId="EBI-11749983">
        <id>Q9UHP7-3</id>
    </interactant>
    <interactant intactId="EBI-3919291">
        <id>Q9Y342</id>
        <label>PLLP</label>
    </interactant>
    <organismsDiffer>false</organismsDiffer>
    <experiments>3</experiments>
</comment>
<comment type="interaction">
    <interactant intactId="EBI-11749983">
        <id>Q9UHP7-3</id>
    </interactant>
    <interactant intactId="EBI-692836">
        <id>P26678</id>
        <label>PLN</label>
    </interactant>
    <organismsDiffer>false</organismsDiffer>
    <experiments>3</experiments>
</comment>
<comment type="interaction">
    <interactant intactId="EBI-11749983">
        <id>Q9UHP7-3</id>
    </interactant>
    <interactant intactId="EBI-12188331">
        <id>P60201-2</id>
        <label>PLP1</label>
    </interactant>
    <organismsDiffer>false</organismsDiffer>
    <experiments>3</experiments>
</comment>
<comment type="interaction">
    <interactant intactId="EBI-11749983">
        <id>Q9UHP7-3</id>
    </interactant>
    <interactant intactId="EBI-1052363">
        <id>Q9NS64</id>
        <label>RPRM</label>
    </interactant>
    <organismsDiffer>false</organismsDiffer>
    <experiments>3</experiments>
</comment>
<comment type="interaction">
    <interactant intactId="EBI-11749983">
        <id>Q9UHP7-3</id>
    </interactant>
    <interactant intactId="EBI-8652744">
        <id>Q96IW7</id>
        <label>SEC22A</label>
    </interactant>
    <organismsDiffer>false</organismsDiffer>
    <experiments>3</experiments>
</comment>
<comment type="interaction">
    <interactant intactId="EBI-11749983">
        <id>Q9UHP7-3</id>
    </interactant>
    <interactant intactId="EBI-13373352">
        <id>Q9BQS2-2</id>
        <label>SYT15</label>
    </interactant>
    <organismsDiffer>false</organismsDiffer>
    <experiments>3</experiments>
</comment>
<comment type="interaction">
    <interactant intactId="EBI-11749983">
        <id>Q9UHP7-3</id>
    </interactant>
    <interactant intactId="EBI-13351685">
        <id>Q96CE8</id>
        <label>TM4SF18</label>
    </interactant>
    <organismsDiffer>false</organismsDiffer>
    <experiments>3</experiments>
</comment>
<comment type="interaction">
    <interactant intactId="EBI-11749983">
        <id>Q9UHP7-3</id>
    </interactant>
    <interactant intactId="EBI-10278423">
        <id>Q8WZ59</id>
        <label>TMEM190</label>
    </interactant>
    <organismsDiffer>false</organismsDiffer>
    <experiments>3</experiments>
</comment>
<comment type="interaction">
    <interactant intactId="EBI-11749983">
        <id>Q9UHP7-3</id>
    </interactant>
    <interactant intactId="EBI-11742770">
        <id>Q96HE8</id>
        <label>TMEM80</label>
    </interactant>
    <organismsDiffer>false</organismsDiffer>
    <experiments>3</experiments>
</comment>
<comment type="interaction">
    <interactant intactId="EBI-11749983">
        <id>Q9UHP7-3</id>
    </interactant>
    <interactant intactId="EBI-8652667">
        <id>O14817</id>
        <label>TSPAN4</label>
    </interactant>
    <organismsDiffer>false</organismsDiffer>
    <experiments>3</experiments>
</comment>
<comment type="interaction">
    <interactant intactId="EBI-11749983">
        <id>Q9UHP7-3</id>
    </interactant>
    <interactant intactId="EBI-720609">
        <id>O76024</id>
        <label>WFS1</label>
    </interactant>
    <organismsDiffer>false</organismsDiffer>
    <experiments>3</experiments>
</comment>
<comment type="subcellular location">
    <subcellularLocation>
        <location evidence="5 9 15">Cell membrane</location>
        <topology evidence="1">Single-pass type II membrane protein</topology>
    </subcellularLocation>
</comment>
<comment type="subcellular location">
    <molecule>Isoform 2</molecule>
    <subcellularLocation>
        <location evidence="9">Endoplasmic reticulum</location>
    </subcellularLocation>
</comment>
<comment type="subcellular location">
    <molecule>Isoform 4</molecule>
    <subcellularLocation>
        <location evidence="9">Endoplasmic reticulum</location>
    </subcellularLocation>
</comment>
<comment type="alternative products">
    <event type="alternative splicing"/>
    <isoform>
        <id>Q9UHP7-1</id>
        <name>1</name>
        <sequence type="displayed"/>
    </isoform>
    <isoform>
        <id>Q9UHP7-2</id>
        <name>3</name>
        <sequence type="described" ref="VSP_039682"/>
    </isoform>
    <isoform>
        <id>Q9UHP7-3</id>
        <name>2</name>
        <sequence type="described" ref="VSP_039683"/>
    </isoform>
    <isoform>
        <id>Q9UHP7-5</id>
        <name>4</name>
        <sequence type="described" ref="VSP_039678"/>
    </isoform>
    <isoform>
        <id>Q9UHP7-6</id>
        <name>5</name>
        <sequence type="described" ref="VSP_039676"/>
    </isoform>
    <isoform>
        <id>Q9UHP7-7</id>
        <name>6</name>
        <sequence type="described" ref="VSP_039676 VSP_039680 VSP_039681"/>
    </isoform>
</comment>
<comment type="tissue specificity">
    <text evidence="3 9">Detected in peripheral blood leukocytes, osteoblasts, lymph node, thymus and spleen. Isoform 1, isoform 2 and isoform 4 are expressed in T- and B-lymphocytes, and at lower levels in NK cells. They are also expressed in B-cell lines and LPS-matured monocyte-derived dendritic cells.</text>
</comment>
<comment type="induction">
    <text evidence="4">Up-regulated by IL1A/interleukin-1 alpha and prostaglandin E2 in cultured osteogenic sarcoma cells.</text>
</comment>
<comment type="PTM">
    <text evidence="5 9 10">N-glycosylated.</text>
</comment>
<comment type="online information" name="Functional Glycomics Gateway - Glycan Binding">
    <link uri="http://www.functionalglycomics.org/glycomics/GBPServlet?&amp;operationType=view&amp;cbpId=cbp_hum_Ctlect_242"/>
    <text>LLT1</text>
</comment>
<organism>
    <name type="scientific">Homo sapiens</name>
    <name type="common">Human</name>
    <dbReference type="NCBI Taxonomy" id="9606"/>
    <lineage>
        <taxon>Eukaryota</taxon>
        <taxon>Metazoa</taxon>
        <taxon>Chordata</taxon>
        <taxon>Craniata</taxon>
        <taxon>Vertebrata</taxon>
        <taxon>Euteleostomi</taxon>
        <taxon>Mammalia</taxon>
        <taxon>Eutheria</taxon>
        <taxon>Euarchontoglires</taxon>
        <taxon>Primates</taxon>
        <taxon>Haplorrhini</taxon>
        <taxon>Catarrhini</taxon>
        <taxon>Hominidae</taxon>
        <taxon>Homo</taxon>
    </lineage>
</organism>
<dbReference type="EMBL" id="AF133299">
    <property type="protein sequence ID" value="AAF22159.1"/>
    <property type="molecule type" value="mRNA"/>
</dbReference>
<dbReference type="EMBL" id="AY144606">
    <property type="protein sequence ID" value="AAN59996.1"/>
    <property type="molecule type" value="Genomic_DNA"/>
</dbReference>
<dbReference type="EMBL" id="FN813349">
    <property type="protein sequence ID" value="CBL81070.1"/>
    <property type="molecule type" value="mRNA"/>
</dbReference>
<dbReference type="EMBL" id="FN813350">
    <property type="protein sequence ID" value="CBL81071.1"/>
    <property type="molecule type" value="mRNA"/>
</dbReference>
<dbReference type="EMBL" id="FN813351">
    <property type="protein sequence ID" value="CBL81072.1"/>
    <property type="molecule type" value="mRNA"/>
</dbReference>
<dbReference type="EMBL" id="AF285087">
    <property type="protein sequence ID" value="AAG00514.1"/>
    <property type="molecule type" value="mRNA"/>
</dbReference>
<dbReference type="EMBL" id="AF285088">
    <property type="protein sequence ID" value="AAG00515.1"/>
    <property type="molecule type" value="mRNA"/>
</dbReference>
<dbReference type="EMBL" id="AF285089">
    <property type="protein sequence ID" value="AAG00516.1"/>
    <property type="molecule type" value="mRNA"/>
</dbReference>
<dbReference type="EMBL" id="AC007068">
    <property type="status" value="NOT_ANNOTATED_CDS"/>
    <property type="molecule type" value="Genomic_DNA"/>
</dbReference>
<dbReference type="EMBL" id="AC010186">
    <property type="status" value="NOT_ANNOTATED_CDS"/>
    <property type="molecule type" value="Genomic_DNA"/>
</dbReference>
<dbReference type="EMBL" id="CH471094">
    <property type="protein sequence ID" value="EAW96114.1"/>
    <property type="molecule type" value="Genomic_DNA"/>
</dbReference>
<dbReference type="EMBL" id="BC019883">
    <property type="protein sequence ID" value="AAH19883.1"/>
    <property type="molecule type" value="mRNA"/>
</dbReference>
<dbReference type="CCDS" id="CCDS31741.1">
    <molecule id="Q9UHP7-3"/>
</dbReference>
<dbReference type="CCDS" id="CCDS55800.1">
    <molecule id="Q9UHP7-5"/>
</dbReference>
<dbReference type="CCDS" id="CCDS55801.1">
    <molecule id="Q9UHP7-6"/>
</dbReference>
<dbReference type="CCDS" id="CCDS55802.1">
    <molecule id="Q9UHP7-7"/>
</dbReference>
<dbReference type="CCDS" id="CCDS8602.1">
    <molecule id="Q9UHP7-1"/>
</dbReference>
<dbReference type="RefSeq" id="NP_001004419.1">
    <molecule id="Q9UHP7-3"/>
    <property type="nucleotide sequence ID" value="NM_001004419.5"/>
</dbReference>
<dbReference type="RefSeq" id="NP_001184246.1">
    <molecule id="Q9UHP7-6"/>
    <property type="nucleotide sequence ID" value="NM_001197317.3"/>
</dbReference>
<dbReference type="RefSeq" id="NP_001184247.1">
    <molecule id="Q9UHP7-5"/>
    <property type="nucleotide sequence ID" value="NM_001197318.3"/>
</dbReference>
<dbReference type="RefSeq" id="NP_001184248.1">
    <molecule id="Q9UHP7-7"/>
    <property type="nucleotide sequence ID" value="NM_001197319.3"/>
</dbReference>
<dbReference type="RefSeq" id="NP_037401.1">
    <molecule id="Q9UHP7-1"/>
    <property type="nucleotide sequence ID" value="NM_013269.6"/>
</dbReference>
<dbReference type="PDB" id="4QKG">
    <property type="method" value="X-ray"/>
    <property type="resolution" value="1.95 A"/>
    <property type="chains" value="A=72-191"/>
</dbReference>
<dbReference type="PDB" id="4QKH">
    <property type="method" value="X-ray"/>
    <property type="resolution" value="1.80 A"/>
    <property type="chains" value="A/B=72-191"/>
</dbReference>
<dbReference type="PDB" id="4QKI">
    <property type="method" value="X-ray"/>
    <property type="resolution" value="1.80 A"/>
    <property type="chains" value="A/B=72-191"/>
</dbReference>
<dbReference type="PDB" id="4QKJ">
    <property type="method" value="X-ray"/>
    <property type="resolution" value="2.75 A"/>
    <property type="chains" value="A=72-191"/>
</dbReference>
<dbReference type="PDB" id="4WCO">
    <property type="method" value="X-ray"/>
    <property type="resolution" value="2.46 A"/>
    <property type="chains" value="A/B/C=71-191"/>
</dbReference>
<dbReference type="PDB" id="5MGT">
    <property type="method" value="X-ray"/>
    <property type="resolution" value="1.90 A"/>
    <property type="chains" value="A/B=72-191"/>
</dbReference>
<dbReference type="PDBsum" id="4QKG"/>
<dbReference type="PDBsum" id="4QKH"/>
<dbReference type="PDBsum" id="4QKI"/>
<dbReference type="PDBsum" id="4QKJ"/>
<dbReference type="PDBsum" id="4WCO"/>
<dbReference type="PDBsum" id="5MGT"/>
<dbReference type="SMR" id="Q9UHP7"/>
<dbReference type="BioGRID" id="118886">
    <property type="interactions" value="223"/>
</dbReference>
<dbReference type="FunCoup" id="Q9UHP7">
    <property type="interactions" value="360"/>
</dbReference>
<dbReference type="IntAct" id="Q9UHP7">
    <property type="interactions" value="196"/>
</dbReference>
<dbReference type="STRING" id="9606.ENSP00000261340"/>
<dbReference type="UniLectin" id="Q9UHP7"/>
<dbReference type="GlyCosmos" id="Q9UHP7">
    <property type="glycosylation" value="2 sites, No reported glycans"/>
</dbReference>
<dbReference type="GlyGen" id="Q9UHP7">
    <property type="glycosylation" value="2 sites"/>
</dbReference>
<dbReference type="iPTMnet" id="Q9UHP7"/>
<dbReference type="PhosphoSitePlus" id="Q9UHP7"/>
<dbReference type="BioMuta" id="CLEC2D"/>
<dbReference type="DMDM" id="74753331"/>
<dbReference type="MassIVE" id="Q9UHP7"/>
<dbReference type="PaxDb" id="9606-ENSP00000261340"/>
<dbReference type="PeptideAtlas" id="Q9UHP7"/>
<dbReference type="ProteomicsDB" id="84389">
    <molecule id="Q9UHP7-1"/>
</dbReference>
<dbReference type="ProteomicsDB" id="84390">
    <molecule id="Q9UHP7-2"/>
</dbReference>
<dbReference type="ProteomicsDB" id="84391">
    <molecule id="Q9UHP7-3"/>
</dbReference>
<dbReference type="ProteomicsDB" id="84392">
    <molecule id="Q9UHP7-5"/>
</dbReference>
<dbReference type="ProteomicsDB" id="84393">
    <molecule id="Q9UHP7-6"/>
</dbReference>
<dbReference type="Antibodypedia" id="2229">
    <property type="antibodies" value="292 antibodies from 33 providers"/>
</dbReference>
<dbReference type="DNASU" id="29121"/>
<dbReference type="Ensembl" id="ENST00000261339.10">
    <molecule id="Q9UHP7-6"/>
    <property type="protein sequence ID" value="ENSP00000261339.6"/>
    <property type="gene ID" value="ENSG00000069493.15"/>
</dbReference>
<dbReference type="Ensembl" id="ENST00000261340.11">
    <molecule id="Q9UHP7-3"/>
    <property type="protein sequence ID" value="ENSP00000261340.7"/>
    <property type="gene ID" value="ENSG00000069493.15"/>
</dbReference>
<dbReference type="Ensembl" id="ENST00000290855.11">
    <molecule id="Q9UHP7-1"/>
    <property type="protein sequence ID" value="ENSP00000290855.6"/>
    <property type="gene ID" value="ENSG00000069493.15"/>
</dbReference>
<dbReference type="Ensembl" id="ENST00000479877.5">
    <molecule id="Q9UHP7-2"/>
    <property type="protein sequence ID" value="ENSP00000441653.1"/>
    <property type="gene ID" value="ENSG00000069493.15"/>
</dbReference>
<dbReference type="Ensembl" id="ENST00000543300.5">
    <molecule id="Q9UHP7-5"/>
    <property type="protein sequence ID" value="ENSP00000443065.1"/>
    <property type="gene ID" value="ENSG00000069493.15"/>
</dbReference>
<dbReference type="Ensembl" id="ENST00000545918.5">
    <molecule id="Q9UHP7-7"/>
    <property type="protein sequence ID" value="ENSP00000444818.1"/>
    <property type="gene ID" value="ENSG00000069493.15"/>
</dbReference>
<dbReference type="GeneID" id="29121"/>
<dbReference type="KEGG" id="hsa:29121"/>
<dbReference type="MANE-Select" id="ENST00000290855.11">
    <property type="protein sequence ID" value="ENSP00000290855.6"/>
    <property type="RefSeq nucleotide sequence ID" value="NM_013269.6"/>
    <property type="RefSeq protein sequence ID" value="NP_037401.1"/>
</dbReference>
<dbReference type="UCSC" id="uc001qwf.4">
    <molecule id="Q9UHP7-1"/>
    <property type="organism name" value="human"/>
</dbReference>
<dbReference type="AGR" id="HGNC:14351"/>
<dbReference type="CTD" id="29121"/>
<dbReference type="DisGeNET" id="29121"/>
<dbReference type="GeneCards" id="CLEC2D"/>
<dbReference type="HGNC" id="HGNC:14351">
    <property type="gene designation" value="CLEC2D"/>
</dbReference>
<dbReference type="HPA" id="ENSG00000069493">
    <property type="expression patterns" value="Tissue enhanced (lymphoid)"/>
</dbReference>
<dbReference type="MIM" id="605659">
    <property type="type" value="gene"/>
</dbReference>
<dbReference type="neXtProt" id="NX_Q9UHP7"/>
<dbReference type="OpenTargets" id="ENSG00000069493"/>
<dbReference type="PharmGKB" id="PA142672100"/>
<dbReference type="VEuPathDB" id="HostDB:ENSG00000069493"/>
<dbReference type="eggNOG" id="KOG4297">
    <property type="taxonomic scope" value="Eukaryota"/>
</dbReference>
<dbReference type="GeneTree" id="ENSGT00940000155319"/>
<dbReference type="HOGENOM" id="CLU_049894_8_4_1"/>
<dbReference type="InParanoid" id="Q9UHP7"/>
<dbReference type="OMA" id="KEMREYP"/>
<dbReference type="OrthoDB" id="9906043at2759"/>
<dbReference type="PAN-GO" id="Q9UHP7">
    <property type="GO annotations" value="2 GO annotations based on evolutionary models"/>
</dbReference>
<dbReference type="PhylomeDB" id="Q9UHP7"/>
<dbReference type="TreeFam" id="TF351467"/>
<dbReference type="PathwayCommons" id="Q9UHP7"/>
<dbReference type="Reactome" id="R-HSA-198933">
    <property type="pathway name" value="Immunoregulatory interactions between a Lymphoid and a non-Lymphoid cell"/>
</dbReference>
<dbReference type="SignaLink" id="Q9UHP7"/>
<dbReference type="BioGRID-ORCS" id="29121">
    <property type="hits" value="12 hits in 1153 CRISPR screens"/>
</dbReference>
<dbReference type="CD-CODE" id="91857CE7">
    <property type="entry name" value="Nucleolus"/>
</dbReference>
<dbReference type="ChiTaRS" id="CLEC2D">
    <property type="organism name" value="human"/>
</dbReference>
<dbReference type="EvolutionaryTrace" id="Q9UHP7"/>
<dbReference type="GeneWiki" id="CLEC2D"/>
<dbReference type="GenomeRNAi" id="29121"/>
<dbReference type="Pharos" id="Q9UHP7">
    <property type="development level" value="Tbio"/>
</dbReference>
<dbReference type="PRO" id="PR:Q9UHP7"/>
<dbReference type="Proteomes" id="UP000005640">
    <property type="component" value="Chromosome 12"/>
</dbReference>
<dbReference type="RNAct" id="Q9UHP7">
    <property type="molecule type" value="protein"/>
</dbReference>
<dbReference type="Bgee" id="ENSG00000069493">
    <property type="expression patterns" value="Expressed in granulocyte and 117 other cell types or tissues"/>
</dbReference>
<dbReference type="ExpressionAtlas" id="Q9UHP7">
    <property type="expression patterns" value="baseline and differential"/>
</dbReference>
<dbReference type="GO" id="GO:0009986">
    <property type="term" value="C:cell surface"/>
    <property type="evidence" value="ECO:0000314"/>
    <property type="project" value="UniProtKB"/>
</dbReference>
<dbReference type="GO" id="GO:0005783">
    <property type="term" value="C:endoplasmic reticulum"/>
    <property type="evidence" value="ECO:0000314"/>
    <property type="project" value="UniProtKB"/>
</dbReference>
<dbReference type="GO" id="GO:0009897">
    <property type="term" value="C:external side of plasma membrane"/>
    <property type="evidence" value="ECO:0000318"/>
    <property type="project" value="GO_Central"/>
</dbReference>
<dbReference type="GO" id="GO:0016020">
    <property type="term" value="C:membrane"/>
    <property type="evidence" value="ECO:0000304"/>
    <property type="project" value="ProtInc"/>
</dbReference>
<dbReference type="GO" id="GO:0005886">
    <property type="term" value="C:plasma membrane"/>
    <property type="evidence" value="ECO:0000304"/>
    <property type="project" value="Reactome"/>
</dbReference>
<dbReference type="GO" id="GO:0030246">
    <property type="term" value="F:carbohydrate binding"/>
    <property type="evidence" value="ECO:0007669"/>
    <property type="project" value="UniProtKB-KW"/>
</dbReference>
<dbReference type="GO" id="GO:0004888">
    <property type="term" value="F:transmembrane signaling receptor activity"/>
    <property type="evidence" value="ECO:0000304"/>
    <property type="project" value="ProtInc"/>
</dbReference>
<dbReference type="GO" id="GO:0007166">
    <property type="term" value="P:cell surface receptor signaling pathway"/>
    <property type="evidence" value="ECO:0000304"/>
    <property type="project" value="ProtInc"/>
</dbReference>
<dbReference type="CDD" id="cd03593">
    <property type="entry name" value="CLECT_NK_receptors_like"/>
    <property type="match status" value="1"/>
</dbReference>
<dbReference type="FunFam" id="3.10.100.10:FF:000062">
    <property type="entry name" value="C-type lectin domain family 2 member D"/>
    <property type="match status" value="1"/>
</dbReference>
<dbReference type="Gene3D" id="3.10.100.10">
    <property type="entry name" value="Mannose-Binding Protein A, subunit A"/>
    <property type="match status" value="1"/>
</dbReference>
<dbReference type="InterPro" id="IPR001304">
    <property type="entry name" value="C-type_lectin-like"/>
</dbReference>
<dbReference type="InterPro" id="IPR016186">
    <property type="entry name" value="C-type_lectin-like/link_sf"/>
</dbReference>
<dbReference type="InterPro" id="IPR050828">
    <property type="entry name" value="C-type_lectin/matrix_domain"/>
</dbReference>
<dbReference type="InterPro" id="IPR016187">
    <property type="entry name" value="CTDL_fold"/>
</dbReference>
<dbReference type="InterPro" id="IPR033992">
    <property type="entry name" value="NKR-like_CTLD"/>
</dbReference>
<dbReference type="PANTHER" id="PTHR45710:SF35">
    <property type="entry name" value="C-TYPE LECTIN DOMAIN FAMILY 2 MEMBER D"/>
    <property type="match status" value="1"/>
</dbReference>
<dbReference type="PANTHER" id="PTHR45710">
    <property type="entry name" value="C-TYPE LECTIN DOMAIN-CONTAINING PROTEIN 180"/>
    <property type="match status" value="1"/>
</dbReference>
<dbReference type="Pfam" id="PF00059">
    <property type="entry name" value="Lectin_C"/>
    <property type="match status" value="1"/>
</dbReference>
<dbReference type="SMART" id="SM00034">
    <property type="entry name" value="CLECT"/>
    <property type="match status" value="1"/>
</dbReference>
<dbReference type="SUPFAM" id="SSF56436">
    <property type="entry name" value="C-type lectin-like"/>
    <property type="match status" value="1"/>
</dbReference>
<dbReference type="PROSITE" id="PS50041">
    <property type="entry name" value="C_TYPE_LECTIN_2"/>
    <property type="match status" value="1"/>
</dbReference>
<protein>
    <recommendedName>
        <fullName>C-type lectin domain family 2 member D</fullName>
    </recommendedName>
    <alternativeName>
        <fullName>Lectin-like NK cell receptor</fullName>
    </alternativeName>
    <alternativeName>
        <fullName>Lectin-like transcript 1</fullName>
        <shortName>LLT-1</shortName>
    </alternativeName>
    <alternativeName>
        <fullName>Osteoclast inhibitory lectin</fullName>
    </alternativeName>
</protein>
<evidence type="ECO:0000255" key="1"/>
<evidence type="ECO:0000255" key="2">
    <source>
        <dbReference type="PROSITE-ProRule" id="PRU00040"/>
    </source>
</evidence>
<evidence type="ECO:0000269" key="3">
    <source>
    </source>
</evidence>
<evidence type="ECO:0000269" key="4">
    <source>
    </source>
</evidence>
<evidence type="ECO:0000269" key="5">
    <source>
    </source>
</evidence>
<evidence type="ECO:0000269" key="6">
    <source>
    </source>
</evidence>
<evidence type="ECO:0000269" key="7">
    <source>
    </source>
</evidence>
<evidence type="ECO:0000269" key="8">
    <source>
    </source>
</evidence>
<evidence type="ECO:0000269" key="9">
    <source>
    </source>
</evidence>
<evidence type="ECO:0000269" key="10">
    <source>
    </source>
</evidence>
<evidence type="ECO:0000269" key="11">
    <source>
    </source>
</evidence>
<evidence type="ECO:0000303" key="12">
    <source>
    </source>
</evidence>
<evidence type="ECO:0000303" key="13">
    <source>
    </source>
</evidence>
<evidence type="ECO:0000303" key="14">
    <source ref="4"/>
</evidence>
<evidence type="ECO:0000305" key="15">
    <source>
    </source>
</evidence>
<evidence type="ECO:0007744" key="16">
    <source>
        <dbReference type="PDB" id="4QKG"/>
    </source>
</evidence>
<evidence type="ECO:0007744" key="17">
    <source>
        <dbReference type="PDB" id="4QKH"/>
    </source>
</evidence>
<evidence type="ECO:0007744" key="18">
    <source>
        <dbReference type="PDB" id="4QKI"/>
    </source>
</evidence>
<evidence type="ECO:0007744" key="19">
    <source>
        <dbReference type="PDB" id="4QKJ"/>
    </source>
</evidence>
<evidence type="ECO:0007744" key="20">
    <source>
        <dbReference type="PDB" id="4WCO"/>
    </source>
</evidence>
<evidence type="ECO:0007829" key="21">
    <source>
        <dbReference type="PDB" id="4QKH"/>
    </source>
</evidence>
<evidence type="ECO:0007829" key="22">
    <source>
        <dbReference type="PDB" id="4QKI"/>
    </source>
</evidence>
<evidence type="ECO:0007829" key="23">
    <source>
        <dbReference type="PDB" id="4WCO"/>
    </source>
</evidence>
<name>CLC2D_HUMAN</name>
<keyword id="KW-0002">3D-structure</keyword>
<keyword id="KW-0025">Alternative splicing</keyword>
<keyword id="KW-1003">Cell membrane</keyword>
<keyword id="KW-1015">Disulfide bond</keyword>
<keyword id="KW-0256">Endoplasmic reticulum</keyword>
<keyword id="KW-0325">Glycoprotein</keyword>
<keyword id="KW-0430">Lectin</keyword>
<keyword id="KW-0472">Membrane</keyword>
<keyword id="KW-1267">Proteomics identification</keyword>
<keyword id="KW-0675">Receptor</keyword>
<keyword id="KW-1185">Reference proteome</keyword>
<keyword id="KW-0735">Signal-anchor</keyword>
<keyword id="KW-0812">Transmembrane</keyword>
<keyword id="KW-1133">Transmembrane helix</keyword>
<sequence>MHDSNNVEKDITPSELPANPGCLHSKEHSIKATLIWRLFFLIMFLTIIVCGMVAALSAIRANCHQEPSVCLQAACPESWIGFQRKCFYFSDDTKNWTSSQRFCDSQDADLAQVESFQELNFLLRYKGPSDHWIGLSREQGQPWKWINGTEWTRQFPILGAGECAYLNDKGASSARHYTERKWICSKSDIHV</sequence>
<reference key="1">
    <citation type="journal article" date="1999" name="Immunogenetics">
        <title>Cloning of a new lectin-like receptor expressed on human NK cells.</title>
        <authorList>
            <person name="Boles K.S."/>
            <person name="Barten R."/>
            <person name="Kumaresan P.R."/>
            <person name="Trowsdale J."/>
            <person name="Mathew P.A."/>
        </authorList>
    </citation>
    <scope>NUCLEOTIDE SEQUENCE [MRNA] (ISOFORM 1)</scope>
    <scope>TISSUE SPECIFICITY</scope>
    <source>
        <tissue>Natural killer cell</tissue>
    </source>
</reference>
<reference key="2">
    <citation type="journal article" date="2004" name="J. Bone Miner. Res.">
        <title>Isolation of a human homolog of osteoclast inhibitory lectin that inhibits the formation and function of osteoclasts.</title>
        <authorList>
            <person name="Hu Y.S."/>
            <person name="Zhou H."/>
            <person name="Myers D."/>
            <person name="Quinn J.M.W."/>
            <person name="Atkins G.J."/>
            <person name="Ly C."/>
            <person name="Gange C."/>
            <person name="Kartsogiannis V."/>
            <person name="Elliott J."/>
            <person name="Kostakis P."/>
            <person name="Zannettino A.C.W."/>
            <person name="Cromer B."/>
            <person name="McKinstry W.J."/>
            <person name="Findlay D.M."/>
            <person name="Gillespie M.T."/>
            <person name="Ng K.W."/>
        </authorList>
    </citation>
    <scope>NUCLEOTIDE SEQUENCE [MRNA] (ISOFORM 1)</scope>
    <scope>FUNCTION</scope>
    <scope>INDUCTION</scope>
    <source>
        <tissue>Fetal liver</tissue>
        <tissue>Fetus</tissue>
    </source>
</reference>
<reference key="3">
    <citation type="journal article" date="2010" name="J. Biol. Chem.">
        <title>Characterization of alternatively spliced transcript variants of CLEC2D gene.</title>
        <authorList>
            <person name="Germain C."/>
            <person name="Bihl F."/>
            <person name="Zahn S."/>
            <person name="Poupon G."/>
            <person name="Dumaurier M.J."/>
            <person name="Rampanarivo H.H."/>
            <person name="Padkjaer S.B."/>
            <person name="Spee P."/>
            <person name="Braud V.M."/>
        </authorList>
    </citation>
    <scope>NUCLEOTIDE SEQUENCE [MRNA] (ISOFORMS 4; 5 AND 6)</scope>
    <scope>ALTERNATIVE SPLICING (ISOFORMS 1 AND 2)</scope>
    <scope>FUNCTION</scope>
    <scope>SUBUNIT</scope>
    <scope>SUBCELLULAR LOCATION</scope>
    <scope>TISSUE SPECIFICITY</scope>
    <scope>GLYCOSYLATION</scope>
    <scope>VARIANTS LYS-19 AND VAL-23</scope>
    <source>
        <tissue>Lymphocyte</tissue>
    </source>
</reference>
<reference key="4">
    <citation type="submission" date="2000-07" db="EMBL/GenBank/DDBJ databases">
        <title>Molecular cloning of a novel CD69 homologue and its variants.</title>
        <authorList>
            <person name="Yang G."/>
            <person name="Chen X."/>
            <person name="Davis P.M."/>
            <person name="Bowen M.A."/>
            <person name="Aruffo A.A."/>
            <person name="Kiener P.A."/>
        </authorList>
    </citation>
    <scope>NUCLEOTIDE SEQUENCE [MRNA] (ISOFORM 1)</scope>
    <scope>NUCLEOTIDE SEQUENCE [MRNA] OF 22-191 (ISOFORM 2)</scope>
    <scope>NUCLEOTIDE SEQUENCE [MRNA] OF 27-191 (ISOFORM 4)</scope>
</reference>
<reference key="5">
    <citation type="journal article" date="2006" name="Nature">
        <title>The finished DNA sequence of human chromosome 12.</title>
        <authorList>
            <person name="Scherer S.E."/>
            <person name="Muzny D.M."/>
            <person name="Buhay C.J."/>
            <person name="Chen R."/>
            <person name="Cree A."/>
            <person name="Ding Y."/>
            <person name="Dugan-Rocha S."/>
            <person name="Gill R."/>
            <person name="Gunaratne P."/>
            <person name="Harris R.A."/>
            <person name="Hawes A.C."/>
            <person name="Hernandez J."/>
            <person name="Hodgson A.V."/>
            <person name="Hume J."/>
            <person name="Jackson A."/>
            <person name="Khan Z.M."/>
            <person name="Kovar-Smith C."/>
            <person name="Lewis L.R."/>
            <person name="Lozado R.J."/>
            <person name="Metzker M.L."/>
            <person name="Milosavljevic A."/>
            <person name="Miner G.R."/>
            <person name="Montgomery K.T."/>
            <person name="Morgan M.B."/>
            <person name="Nazareth L.V."/>
            <person name="Scott G."/>
            <person name="Sodergren E."/>
            <person name="Song X.-Z."/>
            <person name="Steffen D."/>
            <person name="Lovering R.C."/>
            <person name="Wheeler D.A."/>
            <person name="Worley K.C."/>
            <person name="Yuan Y."/>
            <person name="Zhang Z."/>
            <person name="Adams C.Q."/>
            <person name="Ansari-Lari M.A."/>
            <person name="Ayele M."/>
            <person name="Brown M.J."/>
            <person name="Chen G."/>
            <person name="Chen Z."/>
            <person name="Clerc-Blankenburg K.P."/>
            <person name="Davis C."/>
            <person name="Delgado O."/>
            <person name="Dinh H.H."/>
            <person name="Draper H."/>
            <person name="Gonzalez-Garay M.L."/>
            <person name="Havlak P."/>
            <person name="Jackson L.R."/>
            <person name="Jacob L.S."/>
            <person name="Kelly S.H."/>
            <person name="Li L."/>
            <person name="Li Z."/>
            <person name="Liu J."/>
            <person name="Liu W."/>
            <person name="Lu J."/>
            <person name="Maheshwari M."/>
            <person name="Nguyen B.-V."/>
            <person name="Okwuonu G.O."/>
            <person name="Pasternak S."/>
            <person name="Perez L.M."/>
            <person name="Plopper F.J.H."/>
            <person name="Santibanez J."/>
            <person name="Shen H."/>
            <person name="Tabor P.E."/>
            <person name="Verduzco D."/>
            <person name="Waldron L."/>
            <person name="Wang Q."/>
            <person name="Williams G.A."/>
            <person name="Zhang J."/>
            <person name="Zhou J."/>
            <person name="Allen C.C."/>
            <person name="Amin A.G."/>
            <person name="Anyalebechi V."/>
            <person name="Bailey M."/>
            <person name="Barbaria J.A."/>
            <person name="Bimage K.E."/>
            <person name="Bryant N.P."/>
            <person name="Burch P.E."/>
            <person name="Burkett C.E."/>
            <person name="Burrell K.L."/>
            <person name="Calderon E."/>
            <person name="Cardenas V."/>
            <person name="Carter K."/>
            <person name="Casias K."/>
            <person name="Cavazos I."/>
            <person name="Cavazos S.R."/>
            <person name="Ceasar H."/>
            <person name="Chacko J."/>
            <person name="Chan S.N."/>
            <person name="Chavez D."/>
            <person name="Christopoulos C."/>
            <person name="Chu J."/>
            <person name="Cockrell R."/>
            <person name="Cox C.D."/>
            <person name="Dang M."/>
            <person name="Dathorne S.R."/>
            <person name="David R."/>
            <person name="Davis C.M."/>
            <person name="Davy-Carroll L."/>
            <person name="Deshazo D.R."/>
            <person name="Donlin J.E."/>
            <person name="D'Souza L."/>
            <person name="Eaves K.A."/>
            <person name="Egan A."/>
            <person name="Emery-Cohen A.J."/>
            <person name="Escotto M."/>
            <person name="Flagg N."/>
            <person name="Forbes L.D."/>
            <person name="Gabisi A.M."/>
            <person name="Garza M."/>
            <person name="Hamilton C."/>
            <person name="Henderson N."/>
            <person name="Hernandez O."/>
            <person name="Hines S."/>
            <person name="Hogues M.E."/>
            <person name="Huang M."/>
            <person name="Idlebird D.G."/>
            <person name="Johnson R."/>
            <person name="Jolivet A."/>
            <person name="Jones S."/>
            <person name="Kagan R."/>
            <person name="King L.M."/>
            <person name="Leal B."/>
            <person name="Lebow H."/>
            <person name="Lee S."/>
            <person name="LeVan J.M."/>
            <person name="Lewis L.C."/>
            <person name="London P."/>
            <person name="Lorensuhewa L.M."/>
            <person name="Loulseged H."/>
            <person name="Lovett D.A."/>
            <person name="Lucier A."/>
            <person name="Lucier R.L."/>
            <person name="Ma J."/>
            <person name="Madu R.C."/>
            <person name="Mapua P."/>
            <person name="Martindale A.D."/>
            <person name="Martinez E."/>
            <person name="Massey E."/>
            <person name="Mawhiney S."/>
            <person name="Meador M.G."/>
            <person name="Mendez S."/>
            <person name="Mercado C."/>
            <person name="Mercado I.C."/>
            <person name="Merritt C.E."/>
            <person name="Miner Z.L."/>
            <person name="Minja E."/>
            <person name="Mitchell T."/>
            <person name="Mohabbat F."/>
            <person name="Mohabbat K."/>
            <person name="Montgomery B."/>
            <person name="Moore N."/>
            <person name="Morris S."/>
            <person name="Munidasa M."/>
            <person name="Ngo R.N."/>
            <person name="Nguyen N.B."/>
            <person name="Nickerson E."/>
            <person name="Nwaokelemeh O.O."/>
            <person name="Nwokenkwo S."/>
            <person name="Obregon M."/>
            <person name="Oguh M."/>
            <person name="Oragunye N."/>
            <person name="Oviedo R.J."/>
            <person name="Parish B.J."/>
            <person name="Parker D.N."/>
            <person name="Parrish J."/>
            <person name="Parks K.L."/>
            <person name="Paul H.A."/>
            <person name="Payton B.A."/>
            <person name="Perez A."/>
            <person name="Perrin W."/>
            <person name="Pickens A."/>
            <person name="Primus E.L."/>
            <person name="Pu L.-L."/>
            <person name="Puazo M."/>
            <person name="Quiles M.M."/>
            <person name="Quiroz J.B."/>
            <person name="Rabata D."/>
            <person name="Reeves K."/>
            <person name="Ruiz S.J."/>
            <person name="Shao H."/>
            <person name="Sisson I."/>
            <person name="Sonaike T."/>
            <person name="Sorelle R.P."/>
            <person name="Sutton A.E."/>
            <person name="Svatek A.F."/>
            <person name="Svetz L.A."/>
            <person name="Tamerisa K.S."/>
            <person name="Taylor T.R."/>
            <person name="Teague B."/>
            <person name="Thomas N."/>
            <person name="Thorn R.D."/>
            <person name="Trejos Z.Y."/>
            <person name="Trevino B.K."/>
            <person name="Ukegbu O.N."/>
            <person name="Urban J.B."/>
            <person name="Vasquez L.I."/>
            <person name="Vera V.A."/>
            <person name="Villasana D.M."/>
            <person name="Wang L."/>
            <person name="Ward-Moore S."/>
            <person name="Warren J.T."/>
            <person name="Wei X."/>
            <person name="White F."/>
            <person name="Williamson A.L."/>
            <person name="Wleczyk R."/>
            <person name="Wooden H.S."/>
            <person name="Wooden S.H."/>
            <person name="Yen J."/>
            <person name="Yoon L."/>
            <person name="Yoon V."/>
            <person name="Zorrilla S.E."/>
            <person name="Nelson D."/>
            <person name="Kucherlapati R."/>
            <person name="Weinstock G."/>
            <person name="Gibbs R.A."/>
        </authorList>
    </citation>
    <scope>NUCLEOTIDE SEQUENCE [LARGE SCALE GENOMIC DNA]</scope>
</reference>
<reference key="6">
    <citation type="submission" date="2005-07" db="EMBL/GenBank/DDBJ databases">
        <authorList>
            <person name="Mural R.J."/>
            <person name="Istrail S."/>
            <person name="Sutton G.G."/>
            <person name="Florea L."/>
            <person name="Halpern A.L."/>
            <person name="Mobarry C.M."/>
            <person name="Lippert R."/>
            <person name="Walenz B."/>
            <person name="Shatkay H."/>
            <person name="Dew I."/>
            <person name="Miller J.R."/>
            <person name="Flanigan M.J."/>
            <person name="Edwards N.J."/>
            <person name="Bolanos R."/>
            <person name="Fasulo D."/>
            <person name="Halldorsson B.V."/>
            <person name="Hannenhalli S."/>
            <person name="Turner R."/>
            <person name="Yooseph S."/>
            <person name="Lu F."/>
            <person name="Nusskern D.R."/>
            <person name="Shue B.C."/>
            <person name="Zheng X.H."/>
            <person name="Zhong F."/>
            <person name="Delcher A.L."/>
            <person name="Huson D.H."/>
            <person name="Kravitz S.A."/>
            <person name="Mouchard L."/>
            <person name="Reinert K."/>
            <person name="Remington K.A."/>
            <person name="Clark A.G."/>
            <person name="Waterman M.S."/>
            <person name="Eichler E.E."/>
            <person name="Adams M.D."/>
            <person name="Hunkapiller M.W."/>
            <person name="Myers E.W."/>
            <person name="Venter J.C."/>
        </authorList>
    </citation>
    <scope>NUCLEOTIDE SEQUENCE [LARGE SCALE GENOMIC DNA]</scope>
</reference>
<reference key="7">
    <citation type="journal article" date="2004" name="Genome Res.">
        <title>The status, quality, and expansion of the NIH full-length cDNA project: the Mammalian Gene Collection (MGC).</title>
        <authorList>
            <consortium name="The MGC Project Team"/>
        </authorList>
    </citation>
    <scope>NUCLEOTIDE SEQUENCE [LARGE SCALE MRNA] (ISOFORM 3)</scope>
    <scope>VARIANT VAL-23</scope>
    <source>
        <tissue>Testis</tissue>
    </source>
</reference>
<reference key="8">
    <citation type="journal article" date="2004" name="J. Biol. Chem.">
        <title>Characterization of sugar binding by osteoclast inhibitory lectin.</title>
        <authorList>
            <person name="Gange C.T."/>
            <person name="Quinn J.M.W."/>
            <person name="Zhou H."/>
            <person name="Kartsogiannis V."/>
            <person name="Gillespie M.T."/>
            <person name="Ng K.W."/>
        </authorList>
    </citation>
    <scope>FUNCTION</scope>
</reference>
<reference key="9">
    <citation type="journal article" date="2004" name="Mol. Immunol.">
        <title>The LLT1 receptor induces IFN-gamma production by human natural killer cells.</title>
        <authorList>
            <person name="Mathew P.A."/>
            <person name="Chuang S.S."/>
            <person name="Vaidya S.V."/>
            <person name="Kumaresan P.R."/>
            <person name="Boles K.S."/>
            <person name="Pham H.T."/>
        </authorList>
    </citation>
    <scope>FUNCTION</scope>
    <scope>SUBUNIT</scope>
    <scope>SUBCELLULAR LOCATION</scope>
    <scope>GLYCOSYLATION</scope>
</reference>
<reference key="10">
    <citation type="journal article" date="2005" name="J. Immunol.">
        <title>Lectin-like transcript-1 is a ligand for the inhibitory human NKR-P1A receptor.</title>
        <authorList>
            <person name="Rosen D.B."/>
            <person name="Bettadapura J."/>
            <person name="Alsharifi M."/>
            <person name="Mathew P.A."/>
            <person name="Warren H.S."/>
            <person name="Lanier L.L."/>
        </authorList>
    </citation>
    <scope>FUNCTION</scope>
    <scope>SUBCELLULAR LOCATION</scope>
</reference>
<reference key="11">
    <citation type="journal article" date="2015" name="Acta Crystallogr. D">
        <title>Four crystal structures of human LLT1, a ligand of human NKR-P1, in varied glycosylation and oligomerization states.</title>
        <authorList>
            <person name="Skalova T."/>
            <person name="Blaha J."/>
            <person name="Harlos K."/>
            <person name="Duskova J."/>
            <person name="Koval' T."/>
            <person name="Stransky J."/>
            <person name="Hasek J."/>
            <person name="Vanek O."/>
            <person name="Dohnalek J."/>
        </authorList>
    </citation>
    <scope>X-RAY CRYSTALLOGRAPHY (1.80 ANGSTROMS) OF 72-191</scope>
    <scope>SUBUNIT</scope>
    <scope>GLYCOSYLATION AT ASN-95 AND ASN-147</scope>
    <scope>DISULFIDE BONDS</scope>
</reference>
<reference key="12">
    <citation type="journal article" date="2015" name="Eur. J. Immunol.">
        <title>Crystal structure of extracellular domain of human lectin-like transcript 1 (LLT1), the ligand for natural killer receptor-P1A.</title>
        <authorList>
            <person name="Kita S."/>
            <person name="Matsubara H."/>
            <person name="Kasai Y."/>
            <person name="Tamaoki T."/>
            <person name="Okabe Y."/>
            <person name="Fukuhara H."/>
            <person name="Kamishikiryo J."/>
            <person name="Krayukhina E."/>
            <person name="Uchiyama S."/>
            <person name="Ose T."/>
            <person name="Kuroki K."/>
            <person name="Maenaka K."/>
        </authorList>
    </citation>
    <scope>X-RAY CRYSTALLOGRAPHY (2.46 ANGSTROMS) OF 71-191</scope>
    <scope>SUBUNIT</scope>
    <scope>DISULFIDE BONDS</scope>
</reference>
<proteinExistence type="evidence at protein level"/>
<feature type="chain" id="PRO_0000315285" description="C-type lectin domain family 2 member D">
    <location>
        <begin position="1"/>
        <end position="191"/>
    </location>
</feature>
<feature type="topological domain" description="Cytoplasmic" evidence="1">
    <location>
        <begin position="1"/>
        <end position="38"/>
    </location>
</feature>
<feature type="transmembrane region" description="Helical; Signal-anchor for type II membrane protein" evidence="1">
    <location>
        <begin position="39"/>
        <end position="59"/>
    </location>
</feature>
<feature type="topological domain" description="Extracellular" evidence="1">
    <location>
        <begin position="60"/>
        <end position="191"/>
    </location>
</feature>
<feature type="domain" description="C-type lectin" evidence="2">
    <location>
        <begin position="82"/>
        <end position="185"/>
    </location>
</feature>
<feature type="glycosylation site" description="N-linked (GlcNAc...) asparagine" evidence="10 16 17 19">
    <location>
        <position position="95"/>
    </location>
</feature>
<feature type="glycosylation site" description="N-linked (GlcNAc...) asparagine" evidence="11 17">
    <location>
        <position position="147"/>
    </location>
</feature>
<feature type="disulfide bond" evidence="2 16 17 18 19 20">
    <location>
        <begin position="75"/>
        <end position="86"/>
    </location>
</feature>
<feature type="disulfide bond" evidence="2 16 17 18 19 20">
    <location>
        <begin position="103"/>
        <end position="184"/>
    </location>
</feature>
<feature type="splice variant" id="VSP_039676" description="In isoform 5 and isoform 6." evidence="13">
    <location>
        <begin position="21"/>
        <end position="57"/>
    </location>
</feature>
<feature type="splice variant" id="VSP_039678" description="In isoform 4." evidence="13 14">
    <original>NFLLRYKGPSDHWIGLSREQGQPWKWINGTEWTRQFPILGAGECAYLNDKGASSARHYTERKWICSKSDIHV</original>
    <variation>VSYPGSRRVCLFE</variation>
    <location>
        <begin position="120"/>
        <end position="191"/>
    </location>
</feature>
<feature type="splice variant" id="VSP_039680" description="In isoform 6." evidence="13">
    <original>NFLLRYKGPSDHW</original>
    <variation>VSYPGSRRVCLFE</variation>
    <location>
        <begin position="120"/>
        <end position="132"/>
    </location>
</feature>
<feature type="splice variant" id="VSP_039681" description="In isoform 6." evidence="13">
    <location>
        <begin position="133"/>
        <end position="191"/>
    </location>
</feature>
<feature type="splice variant" id="VSP_039683" description="In isoform 2." evidence="14">
    <original>FPILGAGECAYLNDKGASSARHYTERKWICSKSDIHV</original>
    <variation>LVMKEDGANLYVAKVSQVPRMNPRPVMVSYPGSRRVCLFE</variation>
    <location>
        <begin position="155"/>
        <end position="191"/>
    </location>
</feature>
<feature type="splice variant" id="VSP_039682" description="In isoform 3." evidence="12">
    <location>
        <begin position="155"/>
        <end position="191"/>
    </location>
</feature>
<feature type="sequence variant" id="VAR_038172" description="In dbSNP:rs16914640." evidence="9">
    <original>N</original>
    <variation>K</variation>
    <location>
        <position position="19"/>
    </location>
</feature>
<feature type="sequence variant" id="VAR_038173" description="In dbSNP:rs3764022." evidence="7 9">
    <original>L</original>
    <variation>V</variation>
    <location>
        <position position="23"/>
    </location>
</feature>
<feature type="strand" evidence="21">
    <location>
        <begin position="80"/>
        <end position="82"/>
    </location>
</feature>
<feature type="strand" evidence="21">
    <location>
        <begin position="85"/>
        <end position="89"/>
    </location>
</feature>
<feature type="helix" evidence="21">
    <location>
        <begin position="96"/>
        <end position="105"/>
    </location>
</feature>
<feature type="helix" evidence="21">
    <location>
        <begin position="116"/>
        <end position="126"/>
    </location>
</feature>
<feature type="strand" evidence="21">
    <location>
        <begin position="131"/>
        <end position="136"/>
    </location>
</feature>
<feature type="strand" evidence="22">
    <location>
        <begin position="148"/>
        <end position="150"/>
    </location>
</feature>
<feature type="strand" evidence="23">
    <location>
        <begin position="157"/>
        <end position="160"/>
    </location>
</feature>
<feature type="strand" evidence="21">
    <location>
        <begin position="162"/>
        <end position="166"/>
    </location>
</feature>
<feature type="strand" evidence="21">
    <location>
        <begin position="168"/>
        <end position="174"/>
    </location>
</feature>
<feature type="strand" evidence="21">
    <location>
        <begin position="180"/>
        <end position="187"/>
    </location>
</feature>
<accession>Q9UHP7</accession>
<accession>D6CI39</accession>
<accession>D6CI40</accession>
<accession>D6CI41</accession>
<accession>Q6YID5</accession>
<accession>Q8WUP7</accession>
<accession>Q9HD37</accession>
<accession>Q9HD38</accession>
<gene>
    <name type="primary">CLEC2D</name>
    <name type="synonym">CLAX</name>
    <name type="synonym">LLT1</name>
    <name type="synonym">OCIL</name>
</gene>